<name>YIMA_BPPH1</name>
<dbReference type="EMBL" id="M11920">
    <property type="protein sequence ID" value="AAA88400.1"/>
    <property type="molecule type" value="Genomic_DNA"/>
</dbReference>
<dbReference type="PIR" id="I24521">
    <property type="entry name" value="IMBP10"/>
</dbReference>
<reference key="1">
    <citation type="journal article" date="1985" name="Gene">
        <title>Nucleotide sequence of the immunity region of Bacillus subtilis bacteriophage phi 105: identification of the repressor gene and its mRNA and protein products.</title>
        <authorList>
            <person name="Cully D.F."/>
            <person name="Garro A.J."/>
        </authorList>
    </citation>
    <scope>NUCLEOTIDE SEQUENCE [GENOMIC DNA]</scope>
</reference>
<sequence>MCHNALFYVPKHQLQRRPMYVFCGLAFINIKFVTIPSLRNAIRF</sequence>
<organism>
    <name type="scientific">Bacillus phage phi105</name>
    <name type="common">Bacteriophage phi-105</name>
    <dbReference type="NCBI Taxonomy" id="10717"/>
    <lineage>
        <taxon>Viruses</taxon>
        <taxon>Duplodnaviria</taxon>
        <taxon>Heunggongvirae</taxon>
        <taxon>Uroviricota</taxon>
        <taxon>Caudoviricetes</taxon>
        <taxon>Spizizenvirus</taxon>
        <taxon>Spizizenvirus sv105</taxon>
    </lineage>
</organism>
<proteinExistence type="predicted"/>
<accession>P10433</accession>
<protein>
    <recommendedName>
        <fullName>Uncharacterized immunity region protein 10</fullName>
    </recommendedName>
</protein>
<organismHost>
    <name type="scientific">Bacillus subtilis</name>
    <dbReference type="NCBI Taxonomy" id="1423"/>
</organismHost>
<feature type="chain" id="PRO_0000077727" description="Uncharacterized immunity region protein 10">
    <location>
        <begin position="1"/>
        <end position="44"/>
    </location>
</feature>